<protein>
    <recommendedName>
        <fullName evidence="1">Protein-glutamate methylesterase/protein-glutamine glutaminase</fullName>
        <ecNumber evidence="1">3.1.1.61</ecNumber>
        <ecNumber evidence="1">3.5.1.44</ecNumber>
    </recommendedName>
</protein>
<accession>Q8XCF9</accession>
<reference key="1">
    <citation type="journal article" date="2001" name="Nature">
        <title>Genome sequence of enterohaemorrhagic Escherichia coli O157:H7.</title>
        <authorList>
            <person name="Perna N.T."/>
            <person name="Plunkett G. III"/>
            <person name="Burland V."/>
            <person name="Mau B."/>
            <person name="Glasner J.D."/>
            <person name="Rose D.J."/>
            <person name="Mayhew G.F."/>
            <person name="Evans P.S."/>
            <person name="Gregor J."/>
            <person name="Kirkpatrick H.A."/>
            <person name="Posfai G."/>
            <person name="Hackett J."/>
            <person name="Klink S."/>
            <person name="Boutin A."/>
            <person name="Shao Y."/>
            <person name="Miller L."/>
            <person name="Grotbeck E.J."/>
            <person name="Davis N.W."/>
            <person name="Lim A."/>
            <person name="Dimalanta E.T."/>
            <person name="Potamousis K."/>
            <person name="Apodaca J."/>
            <person name="Anantharaman T.S."/>
            <person name="Lin J."/>
            <person name="Yen G."/>
            <person name="Schwartz D.C."/>
            <person name="Welch R.A."/>
            <person name="Blattner F.R."/>
        </authorList>
    </citation>
    <scope>NUCLEOTIDE SEQUENCE [LARGE SCALE GENOMIC DNA]</scope>
    <source>
        <strain>O157:H7 / EDL933 / ATCC 700927 / EHEC</strain>
    </source>
</reference>
<reference key="2">
    <citation type="journal article" date="2001" name="DNA Res.">
        <title>Complete genome sequence of enterohemorrhagic Escherichia coli O157:H7 and genomic comparison with a laboratory strain K-12.</title>
        <authorList>
            <person name="Hayashi T."/>
            <person name="Makino K."/>
            <person name="Ohnishi M."/>
            <person name="Kurokawa K."/>
            <person name="Ishii K."/>
            <person name="Yokoyama K."/>
            <person name="Han C.-G."/>
            <person name="Ohtsubo E."/>
            <person name="Nakayama K."/>
            <person name="Murata T."/>
            <person name="Tanaka M."/>
            <person name="Tobe T."/>
            <person name="Iida T."/>
            <person name="Takami H."/>
            <person name="Honda T."/>
            <person name="Sasakawa C."/>
            <person name="Ogasawara N."/>
            <person name="Yasunaga T."/>
            <person name="Kuhara S."/>
            <person name="Shiba T."/>
            <person name="Hattori M."/>
            <person name="Shinagawa H."/>
        </authorList>
    </citation>
    <scope>NUCLEOTIDE SEQUENCE [LARGE SCALE GENOMIC DNA]</scope>
    <source>
        <strain>O157:H7 / Sakai / RIMD 0509952 / EHEC</strain>
    </source>
</reference>
<keyword id="KW-0145">Chemotaxis</keyword>
<keyword id="KW-0963">Cytoplasm</keyword>
<keyword id="KW-0378">Hydrolase</keyword>
<keyword id="KW-0597">Phosphoprotein</keyword>
<keyword id="KW-1185">Reference proteome</keyword>
<name>CHEB_ECO57</name>
<proteinExistence type="inferred from homology"/>
<dbReference type="EC" id="3.1.1.61" evidence="1"/>
<dbReference type="EC" id="3.5.1.44" evidence="1"/>
<dbReference type="EMBL" id="AE005174">
    <property type="protein sequence ID" value="AAG56873.1"/>
    <property type="molecule type" value="Genomic_DNA"/>
</dbReference>
<dbReference type="EMBL" id="BA000007">
    <property type="protein sequence ID" value="BAB36016.1"/>
    <property type="molecule type" value="Genomic_DNA"/>
</dbReference>
<dbReference type="PIR" id="A90953">
    <property type="entry name" value="A90953"/>
</dbReference>
<dbReference type="PIR" id="E85801">
    <property type="entry name" value="E85801"/>
</dbReference>
<dbReference type="RefSeq" id="NP_310620.1">
    <property type="nucleotide sequence ID" value="NC_002695.1"/>
</dbReference>
<dbReference type="RefSeq" id="WP_000036370.1">
    <property type="nucleotide sequence ID" value="NZ_VOAI01000010.1"/>
</dbReference>
<dbReference type="SMR" id="Q8XCF9"/>
<dbReference type="STRING" id="155864.Z2937"/>
<dbReference type="GeneID" id="913533"/>
<dbReference type="KEGG" id="ece:Z2937"/>
<dbReference type="KEGG" id="ecs:ECs_2593"/>
<dbReference type="PATRIC" id="fig|386585.9.peg.2719"/>
<dbReference type="eggNOG" id="COG2201">
    <property type="taxonomic scope" value="Bacteria"/>
</dbReference>
<dbReference type="HOGENOM" id="CLU_000445_51_0_6"/>
<dbReference type="OMA" id="MLEMHRA"/>
<dbReference type="Proteomes" id="UP000000558">
    <property type="component" value="Chromosome"/>
</dbReference>
<dbReference type="Proteomes" id="UP000002519">
    <property type="component" value="Chromosome"/>
</dbReference>
<dbReference type="GO" id="GO:0005737">
    <property type="term" value="C:cytoplasm"/>
    <property type="evidence" value="ECO:0007669"/>
    <property type="project" value="UniProtKB-SubCell"/>
</dbReference>
<dbReference type="GO" id="GO:0000156">
    <property type="term" value="F:phosphorelay response regulator activity"/>
    <property type="evidence" value="ECO:0007669"/>
    <property type="project" value="InterPro"/>
</dbReference>
<dbReference type="GO" id="GO:0008984">
    <property type="term" value="F:protein-glutamate methylesterase activity"/>
    <property type="evidence" value="ECO:0007669"/>
    <property type="project" value="UniProtKB-UniRule"/>
</dbReference>
<dbReference type="GO" id="GO:0050568">
    <property type="term" value="F:protein-glutamine glutaminase activity"/>
    <property type="evidence" value="ECO:0007669"/>
    <property type="project" value="UniProtKB-UniRule"/>
</dbReference>
<dbReference type="GO" id="GO:0006935">
    <property type="term" value="P:chemotaxis"/>
    <property type="evidence" value="ECO:0007669"/>
    <property type="project" value="UniProtKB-UniRule"/>
</dbReference>
<dbReference type="CDD" id="cd16432">
    <property type="entry name" value="CheB_Rec"/>
    <property type="match status" value="1"/>
</dbReference>
<dbReference type="CDD" id="cd17541">
    <property type="entry name" value="REC_CheB-like"/>
    <property type="match status" value="1"/>
</dbReference>
<dbReference type="FunFam" id="3.40.50.180:FF:000001">
    <property type="entry name" value="Protein-glutamate methylesterase/protein-glutamine glutaminase"/>
    <property type="match status" value="1"/>
</dbReference>
<dbReference type="FunFam" id="3.40.50.2300:FF:000060">
    <property type="entry name" value="Protein-glutamate methylesterase/protein-glutamine glutaminase"/>
    <property type="match status" value="1"/>
</dbReference>
<dbReference type="Gene3D" id="3.40.50.2300">
    <property type="match status" value="1"/>
</dbReference>
<dbReference type="Gene3D" id="3.40.50.180">
    <property type="entry name" value="Methylesterase CheB, C-terminal domain"/>
    <property type="match status" value="1"/>
</dbReference>
<dbReference type="HAMAP" id="MF_00099">
    <property type="entry name" value="CheB_chemtxs"/>
    <property type="match status" value="1"/>
</dbReference>
<dbReference type="InterPro" id="IPR008248">
    <property type="entry name" value="CheB-like"/>
</dbReference>
<dbReference type="InterPro" id="IPR035909">
    <property type="entry name" value="CheB_C"/>
</dbReference>
<dbReference type="InterPro" id="IPR011006">
    <property type="entry name" value="CheY-like_superfamily"/>
</dbReference>
<dbReference type="InterPro" id="IPR000673">
    <property type="entry name" value="Sig_transdc_resp-reg_Me-estase"/>
</dbReference>
<dbReference type="InterPro" id="IPR001789">
    <property type="entry name" value="Sig_transdc_resp-reg_receiver"/>
</dbReference>
<dbReference type="NCBIfam" id="NF001965">
    <property type="entry name" value="PRK00742.1"/>
    <property type="match status" value="1"/>
</dbReference>
<dbReference type="NCBIfam" id="NF009206">
    <property type="entry name" value="PRK12555.1"/>
    <property type="match status" value="1"/>
</dbReference>
<dbReference type="PANTHER" id="PTHR42872">
    <property type="entry name" value="PROTEIN-GLUTAMATE METHYLESTERASE/PROTEIN-GLUTAMINE GLUTAMINASE"/>
    <property type="match status" value="1"/>
</dbReference>
<dbReference type="PANTHER" id="PTHR42872:SF6">
    <property type="entry name" value="PROTEIN-GLUTAMATE METHYLESTERASE_PROTEIN-GLUTAMINE GLUTAMINASE"/>
    <property type="match status" value="1"/>
</dbReference>
<dbReference type="Pfam" id="PF01339">
    <property type="entry name" value="CheB_methylest"/>
    <property type="match status" value="1"/>
</dbReference>
<dbReference type="Pfam" id="PF00072">
    <property type="entry name" value="Response_reg"/>
    <property type="match status" value="1"/>
</dbReference>
<dbReference type="PIRSF" id="PIRSF000876">
    <property type="entry name" value="RR_chemtxs_CheB"/>
    <property type="match status" value="1"/>
</dbReference>
<dbReference type="SMART" id="SM00448">
    <property type="entry name" value="REC"/>
    <property type="match status" value="1"/>
</dbReference>
<dbReference type="SUPFAM" id="SSF52172">
    <property type="entry name" value="CheY-like"/>
    <property type="match status" value="1"/>
</dbReference>
<dbReference type="SUPFAM" id="SSF52738">
    <property type="entry name" value="Methylesterase CheB, C-terminal domain"/>
    <property type="match status" value="1"/>
</dbReference>
<dbReference type="PROSITE" id="PS50122">
    <property type="entry name" value="CHEB"/>
    <property type="match status" value="1"/>
</dbReference>
<dbReference type="PROSITE" id="PS50110">
    <property type="entry name" value="RESPONSE_REGULATORY"/>
    <property type="match status" value="1"/>
</dbReference>
<evidence type="ECO:0000255" key="1">
    <source>
        <dbReference type="HAMAP-Rule" id="MF_00099"/>
    </source>
</evidence>
<sequence length="349" mass="37452">MSKIRVLSVDDSALMRQIMTEIINSHSDMEMVATAPDPLVARDLIKKFNPDVLTLDVEMPRMDGLDFLEKLMRLRPMPVVMVSSLTGKGSEVTLRALELGAIDFVTKPQLGIREGMLAYSEMIAEKVRTAAKASLAAHKPLSAPTTLKAGPLLSSEKLIAIGASTGGTEAIRHVLQPLPLSSPALLITQHMPPGFTRSFADRLNKLCQIGVKEAEDGERVLPGHAYIAPGDRHMELARSGANYQIKIHDGPAVNRHRPSVDVLFHSVAKQAGRNAVGVILTGMGNDGAAGMLAMRQAGAWTLAQNEASCVVFGMPREAINMGGVCEVVDLNQVSQQMLAKISAGQAIRI</sequence>
<comment type="function">
    <text evidence="1">Involved in chemotaxis. Part of a chemotaxis signal transduction system that modulates chemotaxis in response to various stimuli. Catalyzes the demethylation of specific methylglutamate residues introduced into the chemoreceptors (methyl-accepting chemotaxis proteins or MCP) by CheR. Also mediates the irreversible deamidation of specific glutamine residues to glutamic acid.</text>
</comment>
<comment type="catalytic activity">
    <reaction evidence="1">
        <text>[protein]-L-glutamate 5-O-methyl ester + H2O = L-glutamyl-[protein] + methanol + H(+)</text>
        <dbReference type="Rhea" id="RHEA:23236"/>
        <dbReference type="Rhea" id="RHEA-COMP:10208"/>
        <dbReference type="Rhea" id="RHEA-COMP:10311"/>
        <dbReference type="ChEBI" id="CHEBI:15377"/>
        <dbReference type="ChEBI" id="CHEBI:15378"/>
        <dbReference type="ChEBI" id="CHEBI:17790"/>
        <dbReference type="ChEBI" id="CHEBI:29973"/>
        <dbReference type="ChEBI" id="CHEBI:82795"/>
        <dbReference type="EC" id="3.1.1.61"/>
    </reaction>
</comment>
<comment type="catalytic activity">
    <reaction evidence="1">
        <text>L-glutaminyl-[protein] + H2O = L-glutamyl-[protein] + NH4(+)</text>
        <dbReference type="Rhea" id="RHEA:16441"/>
        <dbReference type="Rhea" id="RHEA-COMP:10207"/>
        <dbReference type="Rhea" id="RHEA-COMP:10208"/>
        <dbReference type="ChEBI" id="CHEBI:15377"/>
        <dbReference type="ChEBI" id="CHEBI:28938"/>
        <dbReference type="ChEBI" id="CHEBI:29973"/>
        <dbReference type="ChEBI" id="CHEBI:30011"/>
        <dbReference type="EC" id="3.5.1.44"/>
    </reaction>
</comment>
<comment type="subcellular location">
    <subcellularLocation>
        <location evidence="1">Cytoplasm</location>
    </subcellularLocation>
</comment>
<comment type="domain">
    <text evidence="1">Contains a C-terminal catalytic domain, and an N-terminal region which modulates catalytic activity.</text>
</comment>
<comment type="PTM">
    <text evidence="1">Phosphorylated by CheA. Phosphorylation of the N-terminal regulatory domain activates the methylesterase activity.</text>
</comment>
<comment type="similarity">
    <text evidence="1">Belongs to the CheB family.</text>
</comment>
<feature type="chain" id="PRO_0000157994" description="Protein-glutamate methylesterase/protein-glutamine glutaminase">
    <location>
        <begin position="1"/>
        <end position="349"/>
    </location>
</feature>
<feature type="domain" description="Response regulatory" evidence="1">
    <location>
        <begin position="5"/>
        <end position="122"/>
    </location>
</feature>
<feature type="domain" description="CheB-type methylesterase" evidence="1">
    <location>
        <begin position="152"/>
        <end position="344"/>
    </location>
</feature>
<feature type="active site" evidence="1">
    <location>
        <position position="164"/>
    </location>
</feature>
<feature type="active site" evidence="1">
    <location>
        <position position="190"/>
    </location>
</feature>
<feature type="active site" evidence="1">
    <location>
        <position position="286"/>
    </location>
</feature>
<feature type="modified residue" description="4-aspartylphosphate" evidence="1">
    <location>
        <position position="56"/>
    </location>
</feature>
<gene>
    <name evidence="1" type="primary">cheB</name>
    <name type="ordered locus">Z2937</name>
    <name type="ordered locus">ECs2593</name>
</gene>
<organism>
    <name type="scientific">Escherichia coli O157:H7</name>
    <dbReference type="NCBI Taxonomy" id="83334"/>
    <lineage>
        <taxon>Bacteria</taxon>
        <taxon>Pseudomonadati</taxon>
        <taxon>Pseudomonadota</taxon>
        <taxon>Gammaproteobacteria</taxon>
        <taxon>Enterobacterales</taxon>
        <taxon>Enterobacteriaceae</taxon>
        <taxon>Escherichia</taxon>
    </lineage>
</organism>